<protein>
    <recommendedName>
        <fullName evidence="1">Large ribosomal subunit protein bL9</fullName>
    </recommendedName>
    <alternativeName>
        <fullName evidence="3">50S ribosomal protein L9</fullName>
    </alternativeName>
</protein>
<reference key="1">
    <citation type="journal article" date="2004" name="Proc. Natl. Acad. Sci. U.S.A.">
        <title>The louse-borne human pathogen Bartonella quintana is a genomic derivative of the zoonotic agent Bartonella henselae.</title>
        <authorList>
            <person name="Alsmark U.C.M."/>
            <person name="Frank A.C."/>
            <person name="Karlberg E.O."/>
            <person name="Legault B.-A."/>
            <person name="Ardell D.H."/>
            <person name="Canbaeck B."/>
            <person name="Eriksson A.-S."/>
            <person name="Naeslund A.K."/>
            <person name="Handley S.A."/>
            <person name="Huvet M."/>
            <person name="La Scola B."/>
            <person name="Holmberg M."/>
            <person name="Andersson S.G.E."/>
        </authorList>
    </citation>
    <scope>NUCLEOTIDE SEQUENCE [LARGE SCALE GENOMIC DNA]</scope>
    <source>
        <strain>Toulouse</strain>
    </source>
</reference>
<keyword id="KW-0687">Ribonucleoprotein</keyword>
<keyword id="KW-0689">Ribosomal protein</keyword>
<keyword id="KW-0694">RNA-binding</keyword>
<keyword id="KW-0699">rRNA-binding</keyword>
<dbReference type="EMBL" id="BX897700">
    <property type="protein sequence ID" value="CAF25946.1"/>
    <property type="molecule type" value="Genomic_DNA"/>
</dbReference>
<dbReference type="RefSeq" id="WP_011179235.1">
    <property type="nucleotide sequence ID" value="NC_005955.1"/>
</dbReference>
<dbReference type="SMR" id="Q6G063"/>
<dbReference type="GeneID" id="56533184"/>
<dbReference type="KEGG" id="bqu:BQ04470"/>
<dbReference type="eggNOG" id="COG0359">
    <property type="taxonomic scope" value="Bacteria"/>
</dbReference>
<dbReference type="HOGENOM" id="CLU_078938_1_0_5"/>
<dbReference type="OrthoDB" id="9788336at2"/>
<dbReference type="Proteomes" id="UP000000597">
    <property type="component" value="Chromosome"/>
</dbReference>
<dbReference type="GO" id="GO:1990904">
    <property type="term" value="C:ribonucleoprotein complex"/>
    <property type="evidence" value="ECO:0007669"/>
    <property type="project" value="UniProtKB-KW"/>
</dbReference>
<dbReference type="GO" id="GO:0005840">
    <property type="term" value="C:ribosome"/>
    <property type="evidence" value="ECO:0007669"/>
    <property type="project" value="UniProtKB-KW"/>
</dbReference>
<dbReference type="GO" id="GO:0019843">
    <property type="term" value="F:rRNA binding"/>
    <property type="evidence" value="ECO:0007669"/>
    <property type="project" value="UniProtKB-UniRule"/>
</dbReference>
<dbReference type="GO" id="GO:0003735">
    <property type="term" value="F:structural constituent of ribosome"/>
    <property type="evidence" value="ECO:0007669"/>
    <property type="project" value="InterPro"/>
</dbReference>
<dbReference type="GO" id="GO:0006412">
    <property type="term" value="P:translation"/>
    <property type="evidence" value="ECO:0007669"/>
    <property type="project" value="UniProtKB-UniRule"/>
</dbReference>
<dbReference type="Gene3D" id="3.10.430.100">
    <property type="entry name" value="Ribosomal protein L9, C-terminal domain"/>
    <property type="match status" value="1"/>
</dbReference>
<dbReference type="Gene3D" id="3.40.5.10">
    <property type="entry name" value="Ribosomal protein L9, N-terminal domain"/>
    <property type="match status" value="1"/>
</dbReference>
<dbReference type="HAMAP" id="MF_00503">
    <property type="entry name" value="Ribosomal_bL9"/>
    <property type="match status" value="1"/>
</dbReference>
<dbReference type="InterPro" id="IPR000244">
    <property type="entry name" value="Ribosomal_bL9"/>
</dbReference>
<dbReference type="InterPro" id="IPR009027">
    <property type="entry name" value="Ribosomal_bL9/RNase_H1_N"/>
</dbReference>
<dbReference type="InterPro" id="IPR020594">
    <property type="entry name" value="Ribosomal_bL9_bac/chp"/>
</dbReference>
<dbReference type="InterPro" id="IPR020069">
    <property type="entry name" value="Ribosomal_bL9_C"/>
</dbReference>
<dbReference type="InterPro" id="IPR036791">
    <property type="entry name" value="Ribosomal_bL9_C_sf"/>
</dbReference>
<dbReference type="InterPro" id="IPR020070">
    <property type="entry name" value="Ribosomal_bL9_N"/>
</dbReference>
<dbReference type="InterPro" id="IPR036935">
    <property type="entry name" value="Ribosomal_bL9_N_sf"/>
</dbReference>
<dbReference type="NCBIfam" id="TIGR00158">
    <property type="entry name" value="L9"/>
    <property type="match status" value="1"/>
</dbReference>
<dbReference type="PANTHER" id="PTHR21368">
    <property type="entry name" value="50S RIBOSOMAL PROTEIN L9"/>
    <property type="match status" value="1"/>
</dbReference>
<dbReference type="Pfam" id="PF03948">
    <property type="entry name" value="Ribosomal_L9_C"/>
    <property type="match status" value="1"/>
</dbReference>
<dbReference type="Pfam" id="PF01281">
    <property type="entry name" value="Ribosomal_L9_N"/>
    <property type="match status" value="1"/>
</dbReference>
<dbReference type="SUPFAM" id="SSF55658">
    <property type="entry name" value="L9 N-domain-like"/>
    <property type="match status" value="1"/>
</dbReference>
<dbReference type="SUPFAM" id="SSF55653">
    <property type="entry name" value="Ribosomal protein L9 C-domain"/>
    <property type="match status" value="1"/>
</dbReference>
<dbReference type="PROSITE" id="PS00651">
    <property type="entry name" value="RIBOSOMAL_L9"/>
    <property type="match status" value="1"/>
</dbReference>
<evidence type="ECO:0000255" key="1">
    <source>
        <dbReference type="HAMAP-Rule" id="MF_00503"/>
    </source>
</evidence>
<evidence type="ECO:0000256" key="2">
    <source>
        <dbReference type="SAM" id="MobiDB-lite"/>
    </source>
</evidence>
<evidence type="ECO:0000305" key="3"/>
<proteinExistence type="inferred from homology"/>
<name>RL9_BARQU</name>
<sequence>MDIILLERIPRLGQMGDIVSVKDGYARNFLLPQGKALRANDANKKHFEKQRAQLKARNLERKSEAQKIAEKLDGKSFIVVRSAGETGQLYGSVSTRDISEIITSAGFSIGRNQIELNHPIKTIGLYLITLSLHPEVQISVVINVARSASEAQRQAEGETLTSAEAIYDIQEKPLAENQEEMNDNDANSINEQA</sequence>
<feature type="chain" id="PRO_0000236484" description="Large ribosomal subunit protein bL9">
    <location>
        <begin position="1"/>
        <end position="193"/>
    </location>
</feature>
<feature type="region of interest" description="Disordered" evidence="2">
    <location>
        <begin position="155"/>
        <end position="193"/>
    </location>
</feature>
<feature type="compositionally biased region" description="Polar residues" evidence="2">
    <location>
        <begin position="184"/>
        <end position="193"/>
    </location>
</feature>
<organism>
    <name type="scientific">Bartonella quintana (strain Toulouse)</name>
    <name type="common">Rochalimaea quintana</name>
    <dbReference type="NCBI Taxonomy" id="283165"/>
    <lineage>
        <taxon>Bacteria</taxon>
        <taxon>Pseudomonadati</taxon>
        <taxon>Pseudomonadota</taxon>
        <taxon>Alphaproteobacteria</taxon>
        <taxon>Hyphomicrobiales</taxon>
        <taxon>Bartonellaceae</taxon>
        <taxon>Bartonella</taxon>
    </lineage>
</organism>
<comment type="function">
    <text evidence="1">Binds to the 23S rRNA.</text>
</comment>
<comment type="similarity">
    <text evidence="1">Belongs to the bacterial ribosomal protein bL9 family.</text>
</comment>
<accession>Q6G063</accession>
<gene>
    <name evidence="1" type="primary">rplI</name>
    <name type="ordered locus">BQ04470</name>
</gene>